<gene>
    <name type="primary">PRMT6</name>
    <name type="ordered locus">At3g20020</name>
    <name type="ORF">MAL21.12</name>
</gene>
<dbReference type="EC" id="2.1.1.-"/>
<dbReference type="EMBL" id="AP000383">
    <property type="protein sequence ID" value="BAB01859.1"/>
    <property type="status" value="ALT_SEQ"/>
    <property type="molecule type" value="Genomic_DNA"/>
</dbReference>
<dbReference type="EMBL" id="CP002686">
    <property type="protein sequence ID" value="AEE76320.1"/>
    <property type="molecule type" value="Genomic_DNA"/>
</dbReference>
<dbReference type="EMBL" id="CP002686">
    <property type="protein sequence ID" value="AEE76321.1"/>
    <property type="molecule type" value="Genomic_DNA"/>
</dbReference>
<dbReference type="EMBL" id="BT029008">
    <property type="protein sequence ID" value="ABI93917.1"/>
    <property type="molecule type" value="mRNA"/>
</dbReference>
<dbReference type="RefSeq" id="NP_001078191.1">
    <molecule id="Q08A71-2"/>
    <property type="nucleotide sequence ID" value="NM_001084722.1"/>
</dbReference>
<dbReference type="RefSeq" id="NP_188637.2">
    <molecule id="Q08A71-1"/>
    <property type="nucleotide sequence ID" value="NM_112893.4"/>
</dbReference>
<dbReference type="SMR" id="Q08A71"/>
<dbReference type="FunCoup" id="Q08A71">
    <property type="interactions" value="2928"/>
</dbReference>
<dbReference type="STRING" id="3702.Q08A71"/>
<dbReference type="iPTMnet" id="Q08A71"/>
<dbReference type="PaxDb" id="3702-AT3G20020.1"/>
<dbReference type="ProteomicsDB" id="245003">
    <molecule id="Q08A71-1"/>
</dbReference>
<dbReference type="EnsemblPlants" id="AT3G20020.1">
    <molecule id="Q08A71-1"/>
    <property type="protein sequence ID" value="AT3G20020.1"/>
    <property type="gene ID" value="AT3G20020"/>
</dbReference>
<dbReference type="EnsemblPlants" id="AT3G20020.2">
    <molecule id="Q08A71-2"/>
    <property type="protein sequence ID" value="AT3G20020.2"/>
    <property type="gene ID" value="AT3G20020"/>
</dbReference>
<dbReference type="GeneID" id="821541"/>
<dbReference type="Gramene" id="AT3G20020.1">
    <molecule id="Q08A71-1"/>
    <property type="protein sequence ID" value="AT3G20020.1"/>
    <property type="gene ID" value="AT3G20020"/>
</dbReference>
<dbReference type="Gramene" id="AT3G20020.2">
    <molecule id="Q08A71-2"/>
    <property type="protein sequence ID" value="AT3G20020.2"/>
    <property type="gene ID" value="AT3G20020"/>
</dbReference>
<dbReference type="KEGG" id="ath:AT3G20020"/>
<dbReference type="Araport" id="AT3G20020"/>
<dbReference type="TAIR" id="AT3G20020">
    <property type="gene designation" value="PRMT6"/>
</dbReference>
<dbReference type="eggNOG" id="KOG1499">
    <property type="taxonomic scope" value="Eukaryota"/>
</dbReference>
<dbReference type="HOGENOM" id="CLU_017375_1_2_1"/>
<dbReference type="InParanoid" id="Q08A71"/>
<dbReference type="OMA" id="CIHVDYT"/>
<dbReference type="OrthoDB" id="7848332at2759"/>
<dbReference type="PhylomeDB" id="Q08A71"/>
<dbReference type="PRO" id="PR:Q08A71"/>
<dbReference type="Proteomes" id="UP000006548">
    <property type="component" value="Chromosome 3"/>
</dbReference>
<dbReference type="ExpressionAtlas" id="Q08A71">
    <property type="expression patterns" value="baseline and differential"/>
</dbReference>
<dbReference type="GO" id="GO:0016274">
    <property type="term" value="F:protein-arginine N-methyltransferase activity"/>
    <property type="evidence" value="ECO:0007669"/>
    <property type="project" value="InterPro"/>
</dbReference>
<dbReference type="GO" id="GO:0032259">
    <property type="term" value="P:methylation"/>
    <property type="evidence" value="ECO:0007669"/>
    <property type="project" value="UniProtKB-KW"/>
</dbReference>
<dbReference type="CDD" id="cd02440">
    <property type="entry name" value="AdoMet_MTases"/>
    <property type="match status" value="1"/>
</dbReference>
<dbReference type="FunFam" id="2.70.160.11:FF:000008">
    <property type="entry name" value="Protein arginine N-methyltransferase 6"/>
    <property type="match status" value="1"/>
</dbReference>
<dbReference type="FunFam" id="3.40.50.150:FF:000016">
    <property type="entry name" value="Protein arginine N-methyltransferase 6"/>
    <property type="match status" value="1"/>
</dbReference>
<dbReference type="Gene3D" id="2.70.160.11">
    <property type="entry name" value="Hnrnp arginine n-methyltransferase1"/>
    <property type="match status" value="1"/>
</dbReference>
<dbReference type="Gene3D" id="3.40.50.150">
    <property type="entry name" value="Vaccinia Virus protein VP39"/>
    <property type="match status" value="1"/>
</dbReference>
<dbReference type="InterPro" id="IPR025799">
    <property type="entry name" value="Arg_MeTrfase"/>
</dbReference>
<dbReference type="InterPro" id="IPR055135">
    <property type="entry name" value="PRMT_dom"/>
</dbReference>
<dbReference type="InterPro" id="IPR029063">
    <property type="entry name" value="SAM-dependent_MTases_sf"/>
</dbReference>
<dbReference type="PANTHER" id="PTHR11006">
    <property type="entry name" value="PROTEIN ARGININE N-METHYLTRANSFERASE"/>
    <property type="match status" value="1"/>
</dbReference>
<dbReference type="PANTHER" id="PTHR11006:SF73">
    <property type="entry name" value="PROTEIN ARGININE N-METHYLTRANSFERASE 6"/>
    <property type="match status" value="1"/>
</dbReference>
<dbReference type="Pfam" id="PF06325">
    <property type="entry name" value="PrmA"/>
    <property type="match status" value="1"/>
</dbReference>
<dbReference type="Pfam" id="PF22528">
    <property type="entry name" value="PRMT_C"/>
    <property type="match status" value="2"/>
</dbReference>
<dbReference type="SUPFAM" id="SSF53335">
    <property type="entry name" value="S-adenosyl-L-methionine-dependent methyltransferases"/>
    <property type="match status" value="1"/>
</dbReference>
<dbReference type="PROSITE" id="PS51678">
    <property type="entry name" value="SAM_MT_PRMT"/>
    <property type="match status" value="1"/>
</dbReference>
<sequence length="435" mass="48271">MQSGGDFSNGFHGDHHRELELEDKQGPSLSSFGRAKKRSHAGARDPRGGLANVLRVSDQLGEHKSLETSESSPPPCTDFDVAYFHSYAHVGIHEEMIKDRARTETYREAIMQHQSLIEGKVVVDVGCGTGILSIFCAQAGAKRVYAVDASDIAVQAKEVVKANGLSDKVIVLHGRVEDVEIDEEVDVIISEWMGYMLLYESMLGSVITARDRWLKPGGLILPSHATLYMAPISHPDRYSHSIDFWRNVYGIDMSAMMQLAKQCAFEEPSVESISGENVLTWPEVVKHIDCKTIKIQELDSVTARYKFNSMMRAPMHGFAFWFDVEFSGPASSPAKNTSETSIASGSSSISPSGEVNQKKRTNPSDALVLSTSPESPPTHWQQTIVYFYDPIDVEQDQVIEGSVTLSQSKENKRFMNIHLEYSSAGRSFVKESVMR</sequence>
<organism>
    <name type="scientific">Arabidopsis thaliana</name>
    <name type="common">Mouse-ear cress</name>
    <dbReference type="NCBI Taxonomy" id="3702"/>
    <lineage>
        <taxon>Eukaryota</taxon>
        <taxon>Viridiplantae</taxon>
        <taxon>Streptophyta</taxon>
        <taxon>Embryophyta</taxon>
        <taxon>Tracheophyta</taxon>
        <taxon>Spermatophyta</taxon>
        <taxon>Magnoliopsida</taxon>
        <taxon>eudicotyledons</taxon>
        <taxon>Gunneridae</taxon>
        <taxon>Pentapetalae</taxon>
        <taxon>rosids</taxon>
        <taxon>malvids</taxon>
        <taxon>Brassicales</taxon>
        <taxon>Brassicaceae</taxon>
        <taxon>Camelineae</taxon>
        <taxon>Arabidopsis</taxon>
    </lineage>
</organism>
<keyword id="KW-0025">Alternative splicing</keyword>
<keyword id="KW-0489">Methyltransferase</keyword>
<keyword id="KW-1185">Reference proteome</keyword>
<keyword id="KW-0949">S-adenosyl-L-methionine</keyword>
<keyword id="KW-0808">Transferase</keyword>
<accession>Q08A71</accession>
<accession>Q9LJZ9</accession>
<reference key="1">
    <citation type="journal article" date="2000" name="DNA Res.">
        <title>Structural analysis of Arabidopsis thaliana chromosome 3. II. Sequence features of the 4,251,695 bp regions covered by 90 P1, TAC and BAC clones.</title>
        <authorList>
            <person name="Kaneko T."/>
            <person name="Katoh T."/>
            <person name="Sato S."/>
            <person name="Nakamura Y."/>
            <person name="Asamizu E."/>
            <person name="Tabata S."/>
        </authorList>
    </citation>
    <scope>NUCLEOTIDE SEQUENCE [LARGE SCALE GENOMIC DNA]</scope>
    <source>
        <strain>cv. Columbia</strain>
    </source>
</reference>
<reference key="2">
    <citation type="journal article" date="2017" name="Plant J.">
        <title>Araport11: a complete reannotation of the Arabidopsis thaliana reference genome.</title>
        <authorList>
            <person name="Cheng C.Y."/>
            <person name="Krishnakumar V."/>
            <person name="Chan A.P."/>
            <person name="Thibaud-Nissen F."/>
            <person name="Schobel S."/>
            <person name="Town C.D."/>
        </authorList>
    </citation>
    <scope>GENOME REANNOTATION</scope>
    <source>
        <strain>cv. Columbia</strain>
    </source>
</reference>
<reference key="3">
    <citation type="submission" date="2006-09" db="EMBL/GenBank/DDBJ databases">
        <title>Arabidopsis ORF clones.</title>
        <authorList>
            <person name="Bautista V.R."/>
            <person name="Kim C.J."/>
            <person name="Chen H."/>
            <person name="Quinitio C."/>
            <person name="Ecker J.R."/>
        </authorList>
    </citation>
    <scope>NUCLEOTIDE SEQUENCE [LARGE SCALE MRNA] (ISOFORM 1)</scope>
    <source>
        <strain>cv. Columbia</strain>
    </source>
</reference>
<reference key="4">
    <citation type="journal article" date="2007" name="Pharmacol. Ther.">
        <title>Protein arginine methyltransferases: evolution and assessment of their pharmacological and therapeutic potential.</title>
        <authorList>
            <person name="Krause C.D."/>
            <person name="Yang Z.-H."/>
            <person name="Kim Y.-S."/>
            <person name="Lee J.-H."/>
            <person name="Cook J.R."/>
            <person name="Pestka S."/>
        </authorList>
    </citation>
    <scope>GENE FAMILY</scope>
    <scope>NOMENCLATURE</scope>
</reference>
<evidence type="ECO:0000250" key="1"/>
<evidence type="ECO:0000255" key="2">
    <source>
        <dbReference type="PROSITE-ProRule" id="PRU01015"/>
    </source>
</evidence>
<evidence type="ECO:0000256" key="3">
    <source>
        <dbReference type="SAM" id="MobiDB-lite"/>
    </source>
</evidence>
<evidence type="ECO:0000305" key="4"/>
<feature type="chain" id="PRO_0000293996" description="Probable protein arginine N-methyltransferase 6">
    <location>
        <begin position="1"/>
        <end position="435"/>
    </location>
</feature>
<feature type="domain" description="SAM-dependent MTase PRMT-type" evidence="2">
    <location>
        <begin position="80"/>
        <end position="418"/>
    </location>
</feature>
<feature type="region of interest" description="Disordered" evidence="3">
    <location>
        <begin position="1"/>
        <end position="48"/>
    </location>
</feature>
<feature type="region of interest" description="Disordered" evidence="3">
    <location>
        <begin position="333"/>
        <end position="377"/>
    </location>
</feature>
<feature type="compositionally biased region" description="Basic and acidic residues" evidence="3">
    <location>
        <begin position="12"/>
        <end position="25"/>
    </location>
</feature>
<feature type="compositionally biased region" description="Low complexity" evidence="3">
    <location>
        <begin position="337"/>
        <end position="354"/>
    </location>
</feature>
<feature type="active site" evidence="1">
    <location>
        <position position="191"/>
    </location>
</feature>
<feature type="active site" evidence="1">
    <location>
        <position position="200"/>
    </location>
</feature>
<feature type="binding site" evidence="1">
    <location>
        <position position="93"/>
    </location>
    <ligand>
        <name>S-adenosyl-L-methionine</name>
        <dbReference type="ChEBI" id="CHEBI:59789"/>
    </ligand>
</feature>
<feature type="binding site" evidence="1">
    <location>
        <position position="102"/>
    </location>
    <ligand>
        <name>S-adenosyl-L-methionine</name>
        <dbReference type="ChEBI" id="CHEBI:59789"/>
    </ligand>
</feature>
<feature type="binding site" evidence="1">
    <location>
        <position position="126"/>
    </location>
    <ligand>
        <name>S-adenosyl-L-methionine</name>
        <dbReference type="ChEBI" id="CHEBI:59789"/>
    </ligand>
</feature>
<feature type="binding site" evidence="1">
    <location>
        <position position="148"/>
    </location>
    <ligand>
        <name>S-adenosyl-L-methionine</name>
        <dbReference type="ChEBI" id="CHEBI:59789"/>
    </ligand>
</feature>
<feature type="binding site" evidence="1">
    <location>
        <position position="177"/>
    </location>
    <ligand>
        <name>S-adenosyl-L-methionine</name>
        <dbReference type="ChEBI" id="CHEBI:59789"/>
    </ligand>
</feature>
<feature type="splice variant" id="VSP_026574" description="In isoform 2." evidence="4">
    <location>
        <begin position="156"/>
        <end position="177"/>
    </location>
</feature>
<proteinExistence type="evidence at transcript level"/>
<comment type="function">
    <text evidence="1">Arginine methyltransferase that can both catalyze the formation of omega-N monomethylarginine (MMA) and asymmetrical dimethylarginine (aDMA).</text>
</comment>
<comment type="alternative products">
    <event type="alternative splicing"/>
    <isoform>
        <id>Q08A71-1</id>
        <name>1</name>
        <sequence type="displayed"/>
    </isoform>
    <isoform>
        <id>Q08A71-2</id>
        <name>2</name>
        <sequence type="described" ref="VSP_026574"/>
    </isoform>
</comment>
<comment type="similarity">
    <text evidence="2">Belongs to the class I-like SAM-binding methyltransferase superfamily. Protein arginine N-methyltransferase family. PRMT6 subfamily.</text>
</comment>
<comment type="sequence caution" evidence="4">
    <conflict type="erroneous gene model prediction">
        <sequence resource="EMBL-CDS" id="BAB01859"/>
    </conflict>
</comment>
<protein>
    <recommendedName>
        <fullName>Probable protein arginine N-methyltransferase 6</fullName>
        <ecNumber>2.1.1.-</ecNumber>
    </recommendedName>
</protein>
<name>ANM6_ARATH</name>